<accession>Q0K6Q0</accession>
<feature type="chain" id="PRO_0000288370" description="Proline--tRNA ligase">
    <location>
        <begin position="1"/>
        <end position="573"/>
    </location>
</feature>
<protein>
    <recommendedName>
        <fullName evidence="1">Proline--tRNA ligase</fullName>
        <ecNumber evidence="1">6.1.1.15</ecNumber>
    </recommendedName>
    <alternativeName>
        <fullName evidence="1">Prolyl-tRNA synthetase</fullName>
        <shortName evidence="1">ProRS</shortName>
    </alternativeName>
</protein>
<reference key="1">
    <citation type="journal article" date="2006" name="Nat. Biotechnol.">
        <title>Genome sequence of the bioplastic-producing 'Knallgas' bacterium Ralstonia eutropha H16.</title>
        <authorList>
            <person name="Pohlmann A."/>
            <person name="Fricke W.F."/>
            <person name="Reinecke F."/>
            <person name="Kusian B."/>
            <person name="Liesegang H."/>
            <person name="Cramm R."/>
            <person name="Eitinger T."/>
            <person name="Ewering C."/>
            <person name="Poetter M."/>
            <person name="Schwartz E."/>
            <person name="Strittmatter A."/>
            <person name="Voss I."/>
            <person name="Gottschalk G."/>
            <person name="Steinbuechel A."/>
            <person name="Friedrich B."/>
            <person name="Bowien B."/>
        </authorList>
    </citation>
    <scope>NUCLEOTIDE SEQUENCE [LARGE SCALE GENOMIC DNA]</scope>
    <source>
        <strain>ATCC 17699 / DSM 428 / KCTC 22496 / NCIMB 10442 / H16 / Stanier 337</strain>
    </source>
</reference>
<organism>
    <name type="scientific">Cupriavidus necator (strain ATCC 17699 / DSM 428 / KCTC 22496 / NCIMB 10442 / H16 / Stanier 337)</name>
    <name type="common">Ralstonia eutropha</name>
    <dbReference type="NCBI Taxonomy" id="381666"/>
    <lineage>
        <taxon>Bacteria</taxon>
        <taxon>Pseudomonadati</taxon>
        <taxon>Pseudomonadota</taxon>
        <taxon>Betaproteobacteria</taxon>
        <taxon>Burkholderiales</taxon>
        <taxon>Burkholderiaceae</taxon>
        <taxon>Cupriavidus</taxon>
    </lineage>
</organism>
<proteinExistence type="inferred from homology"/>
<name>SYP_CUPNH</name>
<evidence type="ECO:0000255" key="1">
    <source>
        <dbReference type="HAMAP-Rule" id="MF_01569"/>
    </source>
</evidence>
<sequence>MKASQFFISTLKEAPADAEIVSHKLMMRAGMIKKLGAGIYNYMPIGLRVIRKVENIVREEMNRAGAVELSMPVIQPAELWQETGRWDKMGPELLRLKDRHERDFAVQPTSEEVVTDIARSEIRSYKQLPVNFYQIQTKFRDERRPRFGIMRGREFTMKDAYSFDRDTDGLRKSYENMYDAYVRIFRRFGLEFRAVAADNGAIGGSGSHEFHVIADTGEDAIVYCPTSDYAANMEAAEALPLLASRAAPAEDLVKTATPEKAKCEHVAEFLGIPLQRTVKSIVLAKDTEAGAEIWLLLIRGDHELNEVKASKVPGLADFRFATENEIVDAFGSPPGYLGPIGAKKPVKVVADRTVANMSDFVCGANYRDYHYTGVNWGRDLPEPVVADLRNVVAGDASPDGQGTLEICRGIEVGHVFMLGTRYSESMNATFLDENGKTQPMQMGCYGIGVTRILGAAIEQNFDERGIIWPAAIAPFAVVICPVGYDRSEAVKAEADRIHAELLAAGVDVILDDRGERPGVMFADWELIGVPHRVVVGDRGLKEGKVEYQGRRDAQATAVSVADVVGHVRSQLAN</sequence>
<gene>
    <name evidence="1" type="primary">proS</name>
    <name type="ordered locus">H16_A3246</name>
</gene>
<keyword id="KW-0030">Aminoacyl-tRNA synthetase</keyword>
<keyword id="KW-0067">ATP-binding</keyword>
<keyword id="KW-0963">Cytoplasm</keyword>
<keyword id="KW-0436">Ligase</keyword>
<keyword id="KW-0547">Nucleotide-binding</keyword>
<keyword id="KW-0648">Protein biosynthesis</keyword>
<keyword id="KW-1185">Reference proteome</keyword>
<comment type="function">
    <text evidence="1">Catalyzes the attachment of proline to tRNA(Pro) in a two-step reaction: proline is first activated by ATP to form Pro-AMP and then transferred to the acceptor end of tRNA(Pro). As ProRS can inadvertently accommodate and process non-cognate amino acids such as alanine and cysteine, to avoid such errors it has two additional distinct editing activities against alanine. One activity is designated as 'pretransfer' editing and involves the tRNA(Pro)-independent hydrolysis of activated Ala-AMP. The other activity is designated 'posttransfer' editing and involves deacylation of mischarged Ala-tRNA(Pro). The misacylated Cys-tRNA(Pro) is not edited by ProRS.</text>
</comment>
<comment type="catalytic activity">
    <reaction evidence="1">
        <text>tRNA(Pro) + L-proline + ATP = L-prolyl-tRNA(Pro) + AMP + diphosphate</text>
        <dbReference type="Rhea" id="RHEA:14305"/>
        <dbReference type="Rhea" id="RHEA-COMP:9700"/>
        <dbReference type="Rhea" id="RHEA-COMP:9702"/>
        <dbReference type="ChEBI" id="CHEBI:30616"/>
        <dbReference type="ChEBI" id="CHEBI:33019"/>
        <dbReference type="ChEBI" id="CHEBI:60039"/>
        <dbReference type="ChEBI" id="CHEBI:78442"/>
        <dbReference type="ChEBI" id="CHEBI:78532"/>
        <dbReference type="ChEBI" id="CHEBI:456215"/>
        <dbReference type="EC" id="6.1.1.15"/>
    </reaction>
</comment>
<comment type="subunit">
    <text evidence="1">Homodimer.</text>
</comment>
<comment type="subcellular location">
    <subcellularLocation>
        <location evidence="1">Cytoplasm</location>
    </subcellularLocation>
</comment>
<comment type="domain">
    <text evidence="1">Consists of three domains: the N-terminal catalytic domain, the editing domain and the C-terminal anticodon-binding domain.</text>
</comment>
<comment type="similarity">
    <text evidence="1">Belongs to the class-II aminoacyl-tRNA synthetase family. ProS type 1 subfamily.</text>
</comment>
<dbReference type="EC" id="6.1.1.15" evidence="1"/>
<dbReference type="EMBL" id="AM260479">
    <property type="protein sequence ID" value="CAJ94321.1"/>
    <property type="molecule type" value="Genomic_DNA"/>
</dbReference>
<dbReference type="RefSeq" id="WP_011616078.1">
    <property type="nucleotide sequence ID" value="NC_008313.1"/>
</dbReference>
<dbReference type="SMR" id="Q0K6Q0"/>
<dbReference type="STRING" id="381666.H16_A3246"/>
<dbReference type="KEGG" id="reh:H16_A3246"/>
<dbReference type="PATRIC" id="fig|381666.6.peg.3638"/>
<dbReference type="eggNOG" id="COG0442">
    <property type="taxonomic scope" value="Bacteria"/>
</dbReference>
<dbReference type="HOGENOM" id="CLU_016739_0_0_4"/>
<dbReference type="OrthoDB" id="9809052at2"/>
<dbReference type="Proteomes" id="UP000008210">
    <property type="component" value="Chromosome 1"/>
</dbReference>
<dbReference type="GO" id="GO:0005829">
    <property type="term" value="C:cytosol"/>
    <property type="evidence" value="ECO:0007669"/>
    <property type="project" value="TreeGrafter"/>
</dbReference>
<dbReference type="GO" id="GO:0002161">
    <property type="term" value="F:aminoacyl-tRNA deacylase activity"/>
    <property type="evidence" value="ECO:0007669"/>
    <property type="project" value="InterPro"/>
</dbReference>
<dbReference type="GO" id="GO:0005524">
    <property type="term" value="F:ATP binding"/>
    <property type="evidence" value="ECO:0007669"/>
    <property type="project" value="UniProtKB-UniRule"/>
</dbReference>
<dbReference type="GO" id="GO:0004827">
    <property type="term" value="F:proline-tRNA ligase activity"/>
    <property type="evidence" value="ECO:0007669"/>
    <property type="project" value="UniProtKB-UniRule"/>
</dbReference>
<dbReference type="GO" id="GO:0006433">
    <property type="term" value="P:prolyl-tRNA aminoacylation"/>
    <property type="evidence" value="ECO:0007669"/>
    <property type="project" value="UniProtKB-UniRule"/>
</dbReference>
<dbReference type="CDD" id="cd04334">
    <property type="entry name" value="ProRS-INS"/>
    <property type="match status" value="1"/>
</dbReference>
<dbReference type="CDD" id="cd00861">
    <property type="entry name" value="ProRS_anticodon_short"/>
    <property type="match status" value="1"/>
</dbReference>
<dbReference type="CDD" id="cd00779">
    <property type="entry name" value="ProRS_core_prok"/>
    <property type="match status" value="1"/>
</dbReference>
<dbReference type="FunFam" id="3.30.930.10:FF:000012">
    <property type="entry name" value="Proline--tRNA ligase"/>
    <property type="match status" value="1"/>
</dbReference>
<dbReference type="FunFam" id="3.30.930.10:FF:000097">
    <property type="entry name" value="Proline--tRNA ligase"/>
    <property type="match status" value="1"/>
</dbReference>
<dbReference type="Gene3D" id="3.40.50.800">
    <property type="entry name" value="Anticodon-binding domain"/>
    <property type="match status" value="1"/>
</dbReference>
<dbReference type="Gene3D" id="3.30.930.10">
    <property type="entry name" value="Bira Bifunctional Protein, Domain 2"/>
    <property type="match status" value="2"/>
</dbReference>
<dbReference type="HAMAP" id="MF_01569">
    <property type="entry name" value="Pro_tRNA_synth_type1"/>
    <property type="match status" value="1"/>
</dbReference>
<dbReference type="InterPro" id="IPR002314">
    <property type="entry name" value="aa-tRNA-synt_IIb"/>
</dbReference>
<dbReference type="InterPro" id="IPR006195">
    <property type="entry name" value="aa-tRNA-synth_II"/>
</dbReference>
<dbReference type="InterPro" id="IPR045864">
    <property type="entry name" value="aa-tRNA-synth_II/BPL/LPL"/>
</dbReference>
<dbReference type="InterPro" id="IPR004154">
    <property type="entry name" value="Anticodon-bd"/>
</dbReference>
<dbReference type="InterPro" id="IPR036621">
    <property type="entry name" value="Anticodon-bd_dom_sf"/>
</dbReference>
<dbReference type="InterPro" id="IPR002316">
    <property type="entry name" value="Pro-tRNA-ligase_IIa"/>
</dbReference>
<dbReference type="InterPro" id="IPR004500">
    <property type="entry name" value="Pro-tRNA-synth_IIa_bac-type"/>
</dbReference>
<dbReference type="InterPro" id="IPR023717">
    <property type="entry name" value="Pro-tRNA-Synthase_IIa_type1"/>
</dbReference>
<dbReference type="InterPro" id="IPR050062">
    <property type="entry name" value="Pro-tRNA_synthetase"/>
</dbReference>
<dbReference type="InterPro" id="IPR044140">
    <property type="entry name" value="ProRS_anticodon_short"/>
</dbReference>
<dbReference type="InterPro" id="IPR033730">
    <property type="entry name" value="ProRS_core_prok"/>
</dbReference>
<dbReference type="InterPro" id="IPR036754">
    <property type="entry name" value="YbaK/aa-tRNA-synt-asso_dom_sf"/>
</dbReference>
<dbReference type="InterPro" id="IPR007214">
    <property type="entry name" value="YbaK/aa-tRNA-synth-assoc-dom"/>
</dbReference>
<dbReference type="NCBIfam" id="NF006625">
    <property type="entry name" value="PRK09194.1"/>
    <property type="match status" value="1"/>
</dbReference>
<dbReference type="NCBIfam" id="TIGR00409">
    <property type="entry name" value="proS_fam_II"/>
    <property type="match status" value="1"/>
</dbReference>
<dbReference type="PANTHER" id="PTHR42753">
    <property type="entry name" value="MITOCHONDRIAL RIBOSOME PROTEIN L39/PROLYL-TRNA LIGASE FAMILY MEMBER"/>
    <property type="match status" value="1"/>
</dbReference>
<dbReference type="PANTHER" id="PTHR42753:SF2">
    <property type="entry name" value="PROLINE--TRNA LIGASE"/>
    <property type="match status" value="1"/>
</dbReference>
<dbReference type="Pfam" id="PF03129">
    <property type="entry name" value="HGTP_anticodon"/>
    <property type="match status" value="1"/>
</dbReference>
<dbReference type="Pfam" id="PF00587">
    <property type="entry name" value="tRNA-synt_2b"/>
    <property type="match status" value="1"/>
</dbReference>
<dbReference type="Pfam" id="PF04073">
    <property type="entry name" value="tRNA_edit"/>
    <property type="match status" value="1"/>
</dbReference>
<dbReference type="PIRSF" id="PIRSF001535">
    <property type="entry name" value="ProRS_1"/>
    <property type="match status" value="1"/>
</dbReference>
<dbReference type="PRINTS" id="PR01046">
    <property type="entry name" value="TRNASYNTHPRO"/>
</dbReference>
<dbReference type="SUPFAM" id="SSF52954">
    <property type="entry name" value="Class II aaRS ABD-related"/>
    <property type="match status" value="1"/>
</dbReference>
<dbReference type="SUPFAM" id="SSF55681">
    <property type="entry name" value="Class II aaRS and biotin synthetases"/>
    <property type="match status" value="1"/>
</dbReference>
<dbReference type="SUPFAM" id="SSF55826">
    <property type="entry name" value="YbaK/ProRS associated domain"/>
    <property type="match status" value="1"/>
</dbReference>
<dbReference type="PROSITE" id="PS50862">
    <property type="entry name" value="AA_TRNA_LIGASE_II"/>
    <property type="match status" value="1"/>
</dbReference>